<keyword id="KW-0028">Amino-acid biosynthesis</keyword>
<keyword id="KW-0368">Histidine biosynthesis</keyword>
<keyword id="KW-0378">Hydrolase</keyword>
<keyword id="KW-0486">Methionine biosynthesis</keyword>
<keyword id="KW-0511">Multifunctional enzyme</keyword>
<keyword id="KW-0521">NADP</keyword>
<keyword id="KW-0554">One-carbon metabolism</keyword>
<keyword id="KW-0560">Oxidoreductase</keyword>
<keyword id="KW-0658">Purine biosynthesis</keyword>
<evidence type="ECO:0000255" key="1">
    <source>
        <dbReference type="HAMAP-Rule" id="MF_01576"/>
    </source>
</evidence>
<evidence type="ECO:0000305" key="2"/>
<sequence length="299" mass="31231">MAQLIDGKKLAEDVVSTVKTETEKLVAATGVVPGIAVVIVGEDPASQVYVASKSRKAKECGFHSVQHDLPETASEQELLNLIEGLNNDPAIHGILVQLPLPGHIDSGRVIQTIAPEKDVDGFHFINVGKLGTGEVETAFVPCTPAGAMIMIERVHGRDLSGLNAVVIGRSNIVGKPMFNLLLAANATVTVAHSRTKDLPAIARNADILVAAVGRPQMVKGDWVKPGATVIDVGINRIPAPERGEGKTRLVGDVDFAEAEKVAGAITPVPGGVGPMTIAMLMANTLTAACRSAGMKKPVF</sequence>
<gene>
    <name evidence="1" type="primary">folD</name>
    <name type="ordered locus">BMEII0510</name>
</gene>
<name>FOLD_BRUME</name>
<accession>Q8YCL8</accession>
<feature type="chain" id="PRO_0000268295" description="Bifunctional protein FolD">
    <location>
        <begin position="1"/>
        <end position="299"/>
    </location>
</feature>
<feature type="binding site" evidence="1">
    <location>
        <begin position="168"/>
        <end position="170"/>
    </location>
    <ligand>
        <name>NADP(+)</name>
        <dbReference type="ChEBI" id="CHEBI:58349"/>
    </ligand>
</feature>
<feature type="binding site" evidence="1">
    <location>
        <position position="193"/>
    </location>
    <ligand>
        <name>NADP(+)</name>
        <dbReference type="ChEBI" id="CHEBI:58349"/>
    </ligand>
</feature>
<feature type="binding site" evidence="1">
    <location>
        <position position="234"/>
    </location>
    <ligand>
        <name>NADP(+)</name>
        <dbReference type="ChEBI" id="CHEBI:58349"/>
    </ligand>
</feature>
<reference key="1">
    <citation type="journal article" date="2002" name="Proc. Natl. Acad. Sci. U.S.A.">
        <title>The genome sequence of the facultative intracellular pathogen Brucella melitensis.</title>
        <authorList>
            <person name="DelVecchio V.G."/>
            <person name="Kapatral V."/>
            <person name="Redkar R.J."/>
            <person name="Patra G."/>
            <person name="Mujer C."/>
            <person name="Los T."/>
            <person name="Ivanova N."/>
            <person name="Anderson I."/>
            <person name="Bhattacharyya A."/>
            <person name="Lykidis A."/>
            <person name="Reznik G."/>
            <person name="Jablonski L."/>
            <person name="Larsen N."/>
            <person name="D'Souza M."/>
            <person name="Bernal A."/>
            <person name="Mazur M."/>
            <person name="Goltsman E."/>
            <person name="Selkov E."/>
            <person name="Elzer P.H."/>
            <person name="Hagius S."/>
            <person name="O'Callaghan D."/>
            <person name="Letesson J.-J."/>
            <person name="Haselkorn R."/>
            <person name="Kyrpides N.C."/>
            <person name="Overbeek R."/>
        </authorList>
    </citation>
    <scope>NUCLEOTIDE SEQUENCE [LARGE SCALE GENOMIC DNA]</scope>
    <source>
        <strain>ATCC 23456 / CCUG 17765 / NCTC 10094 / 16M</strain>
    </source>
</reference>
<proteinExistence type="inferred from homology"/>
<dbReference type="EC" id="1.5.1.5" evidence="1"/>
<dbReference type="EC" id="3.5.4.9" evidence="1"/>
<dbReference type="EMBL" id="AE008918">
    <property type="protein sequence ID" value="AAL53752.1"/>
    <property type="status" value="ALT_INIT"/>
    <property type="molecule type" value="Genomic_DNA"/>
</dbReference>
<dbReference type="PIR" id="AE3573">
    <property type="entry name" value="AE3573"/>
</dbReference>
<dbReference type="RefSeq" id="WP_002967255.1">
    <property type="nucleotide sequence ID" value="NZ_GG703779.1"/>
</dbReference>
<dbReference type="SMR" id="Q8YCL8"/>
<dbReference type="GeneID" id="97535127"/>
<dbReference type="KEGG" id="bme:BMEII0510"/>
<dbReference type="KEGG" id="bmel:DK63_2733"/>
<dbReference type="PATRIC" id="fig|224914.52.peg.2862"/>
<dbReference type="eggNOG" id="COG0190">
    <property type="taxonomic scope" value="Bacteria"/>
</dbReference>
<dbReference type="UniPathway" id="UPA00193"/>
<dbReference type="Proteomes" id="UP000000419">
    <property type="component" value="Chromosome II"/>
</dbReference>
<dbReference type="GO" id="GO:0005829">
    <property type="term" value="C:cytosol"/>
    <property type="evidence" value="ECO:0007669"/>
    <property type="project" value="TreeGrafter"/>
</dbReference>
<dbReference type="GO" id="GO:0004477">
    <property type="term" value="F:methenyltetrahydrofolate cyclohydrolase activity"/>
    <property type="evidence" value="ECO:0007669"/>
    <property type="project" value="UniProtKB-UniRule"/>
</dbReference>
<dbReference type="GO" id="GO:0004488">
    <property type="term" value="F:methylenetetrahydrofolate dehydrogenase (NADP+) activity"/>
    <property type="evidence" value="ECO:0007669"/>
    <property type="project" value="UniProtKB-UniRule"/>
</dbReference>
<dbReference type="GO" id="GO:0000105">
    <property type="term" value="P:L-histidine biosynthetic process"/>
    <property type="evidence" value="ECO:0007669"/>
    <property type="project" value="UniProtKB-KW"/>
</dbReference>
<dbReference type="GO" id="GO:0009086">
    <property type="term" value="P:methionine biosynthetic process"/>
    <property type="evidence" value="ECO:0007669"/>
    <property type="project" value="UniProtKB-KW"/>
</dbReference>
<dbReference type="GO" id="GO:0006164">
    <property type="term" value="P:purine nucleotide biosynthetic process"/>
    <property type="evidence" value="ECO:0007669"/>
    <property type="project" value="UniProtKB-KW"/>
</dbReference>
<dbReference type="GO" id="GO:0035999">
    <property type="term" value="P:tetrahydrofolate interconversion"/>
    <property type="evidence" value="ECO:0007669"/>
    <property type="project" value="UniProtKB-UniRule"/>
</dbReference>
<dbReference type="CDD" id="cd01080">
    <property type="entry name" value="NAD_bind_m-THF_DH_Cyclohyd"/>
    <property type="match status" value="1"/>
</dbReference>
<dbReference type="FunFam" id="3.40.50.720:FF:000006">
    <property type="entry name" value="Bifunctional protein FolD"/>
    <property type="match status" value="1"/>
</dbReference>
<dbReference type="FunFam" id="3.40.50.10860:FF:000005">
    <property type="entry name" value="C-1-tetrahydrofolate synthase, cytoplasmic, putative"/>
    <property type="match status" value="1"/>
</dbReference>
<dbReference type="Gene3D" id="3.40.50.10860">
    <property type="entry name" value="Leucine Dehydrogenase, chain A, domain 1"/>
    <property type="match status" value="1"/>
</dbReference>
<dbReference type="Gene3D" id="3.40.50.720">
    <property type="entry name" value="NAD(P)-binding Rossmann-like Domain"/>
    <property type="match status" value="1"/>
</dbReference>
<dbReference type="HAMAP" id="MF_01576">
    <property type="entry name" value="THF_DHG_CYH"/>
    <property type="match status" value="1"/>
</dbReference>
<dbReference type="InterPro" id="IPR046346">
    <property type="entry name" value="Aminoacid_DH-like_N_sf"/>
</dbReference>
<dbReference type="InterPro" id="IPR036291">
    <property type="entry name" value="NAD(P)-bd_dom_sf"/>
</dbReference>
<dbReference type="InterPro" id="IPR000672">
    <property type="entry name" value="THF_DH/CycHdrlase"/>
</dbReference>
<dbReference type="InterPro" id="IPR020630">
    <property type="entry name" value="THF_DH/CycHdrlase_cat_dom"/>
</dbReference>
<dbReference type="InterPro" id="IPR020867">
    <property type="entry name" value="THF_DH/CycHdrlase_CS"/>
</dbReference>
<dbReference type="InterPro" id="IPR020631">
    <property type="entry name" value="THF_DH/CycHdrlase_NAD-bd_dom"/>
</dbReference>
<dbReference type="NCBIfam" id="NF008058">
    <property type="entry name" value="PRK10792.1"/>
    <property type="match status" value="1"/>
</dbReference>
<dbReference type="NCBIfam" id="NF010783">
    <property type="entry name" value="PRK14186.1"/>
    <property type="match status" value="1"/>
</dbReference>
<dbReference type="NCBIfam" id="NF010785">
    <property type="entry name" value="PRK14188.1"/>
    <property type="match status" value="1"/>
</dbReference>
<dbReference type="PANTHER" id="PTHR48099:SF5">
    <property type="entry name" value="C-1-TETRAHYDROFOLATE SYNTHASE, CYTOPLASMIC"/>
    <property type="match status" value="1"/>
</dbReference>
<dbReference type="PANTHER" id="PTHR48099">
    <property type="entry name" value="C-1-TETRAHYDROFOLATE SYNTHASE, CYTOPLASMIC-RELATED"/>
    <property type="match status" value="1"/>
</dbReference>
<dbReference type="Pfam" id="PF00763">
    <property type="entry name" value="THF_DHG_CYH"/>
    <property type="match status" value="1"/>
</dbReference>
<dbReference type="Pfam" id="PF02882">
    <property type="entry name" value="THF_DHG_CYH_C"/>
    <property type="match status" value="1"/>
</dbReference>
<dbReference type="PRINTS" id="PR00085">
    <property type="entry name" value="THFDHDRGNASE"/>
</dbReference>
<dbReference type="SUPFAM" id="SSF53223">
    <property type="entry name" value="Aminoacid dehydrogenase-like, N-terminal domain"/>
    <property type="match status" value="1"/>
</dbReference>
<dbReference type="SUPFAM" id="SSF51735">
    <property type="entry name" value="NAD(P)-binding Rossmann-fold domains"/>
    <property type="match status" value="1"/>
</dbReference>
<dbReference type="PROSITE" id="PS00766">
    <property type="entry name" value="THF_DHG_CYH_1"/>
    <property type="match status" value="1"/>
</dbReference>
<dbReference type="PROSITE" id="PS00767">
    <property type="entry name" value="THF_DHG_CYH_2"/>
    <property type="match status" value="1"/>
</dbReference>
<comment type="function">
    <text evidence="1">Catalyzes the oxidation of 5,10-methylenetetrahydrofolate to 5,10-methenyltetrahydrofolate and then the hydrolysis of 5,10-methenyltetrahydrofolate to 10-formyltetrahydrofolate.</text>
</comment>
<comment type="catalytic activity">
    <reaction evidence="1">
        <text>(6R)-5,10-methylene-5,6,7,8-tetrahydrofolate + NADP(+) = (6R)-5,10-methenyltetrahydrofolate + NADPH</text>
        <dbReference type="Rhea" id="RHEA:22812"/>
        <dbReference type="ChEBI" id="CHEBI:15636"/>
        <dbReference type="ChEBI" id="CHEBI:57455"/>
        <dbReference type="ChEBI" id="CHEBI:57783"/>
        <dbReference type="ChEBI" id="CHEBI:58349"/>
        <dbReference type="EC" id="1.5.1.5"/>
    </reaction>
</comment>
<comment type="catalytic activity">
    <reaction evidence="1">
        <text>(6R)-5,10-methenyltetrahydrofolate + H2O = (6R)-10-formyltetrahydrofolate + H(+)</text>
        <dbReference type="Rhea" id="RHEA:23700"/>
        <dbReference type="ChEBI" id="CHEBI:15377"/>
        <dbReference type="ChEBI" id="CHEBI:15378"/>
        <dbReference type="ChEBI" id="CHEBI:57455"/>
        <dbReference type="ChEBI" id="CHEBI:195366"/>
        <dbReference type="EC" id="3.5.4.9"/>
    </reaction>
</comment>
<comment type="pathway">
    <text evidence="1">One-carbon metabolism; tetrahydrofolate interconversion.</text>
</comment>
<comment type="subunit">
    <text evidence="1">Homodimer.</text>
</comment>
<comment type="similarity">
    <text evidence="1">Belongs to the tetrahydrofolate dehydrogenase/cyclohydrolase family.</text>
</comment>
<comment type="sequence caution" evidence="2">
    <conflict type="erroneous initiation">
        <sequence resource="EMBL-CDS" id="AAL53752"/>
    </conflict>
</comment>
<organism>
    <name type="scientific">Brucella melitensis biotype 1 (strain ATCC 23456 / CCUG 17765 / NCTC 10094 / 16M)</name>
    <dbReference type="NCBI Taxonomy" id="224914"/>
    <lineage>
        <taxon>Bacteria</taxon>
        <taxon>Pseudomonadati</taxon>
        <taxon>Pseudomonadota</taxon>
        <taxon>Alphaproteobacteria</taxon>
        <taxon>Hyphomicrobiales</taxon>
        <taxon>Brucellaceae</taxon>
        <taxon>Brucella/Ochrobactrum group</taxon>
        <taxon>Brucella</taxon>
    </lineage>
</organism>
<protein>
    <recommendedName>
        <fullName evidence="1">Bifunctional protein FolD</fullName>
    </recommendedName>
    <domain>
        <recommendedName>
            <fullName evidence="1">Methylenetetrahydrofolate dehydrogenase</fullName>
            <ecNumber evidence="1">1.5.1.5</ecNumber>
        </recommendedName>
    </domain>
    <domain>
        <recommendedName>
            <fullName evidence="1">Methenyltetrahydrofolate cyclohydrolase</fullName>
            <ecNumber evidence="1">3.5.4.9</ecNumber>
        </recommendedName>
    </domain>
</protein>